<organism>
    <name type="scientific">Escherichia fergusonii (strain ATCC 35469 / DSM 13698 / CCUG 18766 / IAM 14443 / JCM 21226 / LMG 7866 / NBRC 102419 / NCTC 12128 / CDC 0568-73)</name>
    <dbReference type="NCBI Taxonomy" id="585054"/>
    <lineage>
        <taxon>Bacteria</taxon>
        <taxon>Pseudomonadati</taxon>
        <taxon>Pseudomonadota</taxon>
        <taxon>Gammaproteobacteria</taxon>
        <taxon>Enterobacterales</taxon>
        <taxon>Enterobacteriaceae</taxon>
        <taxon>Escherichia</taxon>
    </lineage>
</organism>
<gene>
    <name evidence="1" type="primary">yegS</name>
    <name type="ordered locus">EFER_2172</name>
</gene>
<dbReference type="EC" id="2.7.1.-" evidence="1"/>
<dbReference type="EMBL" id="CU928158">
    <property type="protein sequence ID" value="CAQ89674.1"/>
    <property type="molecule type" value="Genomic_DNA"/>
</dbReference>
<dbReference type="RefSeq" id="WP_000774462.1">
    <property type="nucleotide sequence ID" value="NC_011740.1"/>
</dbReference>
<dbReference type="SMR" id="B7LV48"/>
<dbReference type="GeneID" id="75056793"/>
<dbReference type="KEGG" id="efe:EFER_2172"/>
<dbReference type="HOGENOM" id="CLU_045532_1_1_6"/>
<dbReference type="OrthoDB" id="142078at2"/>
<dbReference type="Proteomes" id="UP000000745">
    <property type="component" value="Chromosome"/>
</dbReference>
<dbReference type="GO" id="GO:0005737">
    <property type="term" value="C:cytoplasm"/>
    <property type="evidence" value="ECO:0007669"/>
    <property type="project" value="UniProtKB-SubCell"/>
</dbReference>
<dbReference type="GO" id="GO:0005886">
    <property type="term" value="C:plasma membrane"/>
    <property type="evidence" value="ECO:0007669"/>
    <property type="project" value="TreeGrafter"/>
</dbReference>
<dbReference type="GO" id="GO:0005524">
    <property type="term" value="F:ATP binding"/>
    <property type="evidence" value="ECO:0007669"/>
    <property type="project" value="UniProtKB-UniRule"/>
</dbReference>
<dbReference type="GO" id="GO:0001727">
    <property type="term" value="F:lipid kinase activity"/>
    <property type="evidence" value="ECO:0007669"/>
    <property type="project" value="UniProtKB-UniRule"/>
</dbReference>
<dbReference type="GO" id="GO:0000287">
    <property type="term" value="F:magnesium ion binding"/>
    <property type="evidence" value="ECO:0007669"/>
    <property type="project" value="UniProtKB-UniRule"/>
</dbReference>
<dbReference type="GO" id="GO:0008654">
    <property type="term" value="P:phospholipid biosynthetic process"/>
    <property type="evidence" value="ECO:0007669"/>
    <property type="project" value="UniProtKB-UniRule"/>
</dbReference>
<dbReference type="FunFam" id="2.60.200.40:FF:000008">
    <property type="entry name" value="Probable lipid kinase YegS"/>
    <property type="match status" value="1"/>
</dbReference>
<dbReference type="FunFam" id="3.40.50.10330:FF:000008">
    <property type="entry name" value="Probable lipid kinase YegS"/>
    <property type="match status" value="1"/>
</dbReference>
<dbReference type="Gene3D" id="2.60.200.40">
    <property type="match status" value="1"/>
</dbReference>
<dbReference type="Gene3D" id="3.40.50.10330">
    <property type="entry name" value="Probable inorganic polyphosphate/atp-NAD kinase, domain 1"/>
    <property type="match status" value="1"/>
</dbReference>
<dbReference type="HAMAP" id="MF_01377">
    <property type="entry name" value="YegS"/>
    <property type="match status" value="1"/>
</dbReference>
<dbReference type="InterPro" id="IPR017438">
    <property type="entry name" value="ATP-NAD_kinase_N"/>
</dbReference>
<dbReference type="InterPro" id="IPR005218">
    <property type="entry name" value="Diacylglycerol/lipid_kinase"/>
</dbReference>
<dbReference type="InterPro" id="IPR001206">
    <property type="entry name" value="Diacylglycerol_kinase_cat_dom"/>
</dbReference>
<dbReference type="InterPro" id="IPR022433">
    <property type="entry name" value="Lip_kinase_YegS"/>
</dbReference>
<dbReference type="InterPro" id="IPR050187">
    <property type="entry name" value="Lipid_Phosphate_FormReg"/>
</dbReference>
<dbReference type="InterPro" id="IPR016064">
    <property type="entry name" value="NAD/diacylglycerol_kinase_sf"/>
</dbReference>
<dbReference type="InterPro" id="IPR045540">
    <property type="entry name" value="YegS/DAGK_C"/>
</dbReference>
<dbReference type="NCBIfam" id="TIGR03702">
    <property type="entry name" value="lip_kinase_YegS"/>
    <property type="match status" value="1"/>
</dbReference>
<dbReference type="NCBIfam" id="NF009602">
    <property type="entry name" value="PRK13054.1"/>
    <property type="match status" value="1"/>
</dbReference>
<dbReference type="NCBIfam" id="TIGR00147">
    <property type="entry name" value="YegS/Rv2252/BmrU family lipid kinase"/>
    <property type="match status" value="1"/>
</dbReference>
<dbReference type="PANTHER" id="PTHR12358:SF106">
    <property type="entry name" value="LIPID KINASE YEGS"/>
    <property type="match status" value="1"/>
</dbReference>
<dbReference type="PANTHER" id="PTHR12358">
    <property type="entry name" value="SPHINGOSINE KINASE"/>
    <property type="match status" value="1"/>
</dbReference>
<dbReference type="Pfam" id="PF00781">
    <property type="entry name" value="DAGK_cat"/>
    <property type="match status" value="1"/>
</dbReference>
<dbReference type="Pfam" id="PF19279">
    <property type="entry name" value="YegS_C"/>
    <property type="match status" value="1"/>
</dbReference>
<dbReference type="SMART" id="SM00046">
    <property type="entry name" value="DAGKc"/>
    <property type="match status" value="1"/>
</dbReference>
<dbReference type="SUPFAM" id="SSF111331">
    <property type="entry name" value="NAD kinase/diacylglycerol kinase-like"/>
    <property type="match status" value="1"/>
</dbReference>
<dbReference type="PROSITE" id="PS50146">
    <property type="entry name" value="DAGK"/>
    <property type="match status" value="1"/>
</dbReference>
<proteinExistence type="inferred from homology"/>
<evidence type="ECO:0000255" key="1">
    <source>
        <dbReference type="HAMAP-Rule" id="MF_01377"/>
    </source>
</evidence>
<feature type="chain" id="PRO_1000144870" description="Probable lipid kinase YegS">
    <location>
        <begin position="1"/>
        <end position="299"/>
    </location>
</feature>
<feature type="domain" description="DAGKc" evidence="1">
    <location>
        <begin position="2"/>
        <end position="133"/>
    </location>
</feature>
<feature type="active site" description="Proton acceptor" evidence="1">
    <location>
        <position position="271"/>
    </location>
</feature>
<feature type="binding site" evidence="1">
    <location>
        <position position="40"/>
    </location>
    <ligand>
        <name>ATP</name>
        <dbReference type="ChEBI" id="CHEBI:30616"/>
    </ligand>
</feature>
<feature type="binding site" evidence="1">
    <location>
        <begin position="66"/>
        <end position="72"/>
    </location>
    <ligand>
        <name>ATP</name>
        <dbReference type="ChEBI" id="CHEBI:30616"/>
    </ligand>
</feature>
<feature type="binding site" evidence="1">
    <location>
        <position position="95"/>
    </location>
    <ligand>
        <name>ATP</name>
        <dbReference type="ChEBI" id="CHEBI:30616"/>
    </ligand>
</feature>
<feature type="binding site" evidence="1">
    <location>
        <position position="215"/>
    </location>
    <ligand>
        <name>Mg(2+)</name>
        <dbReference type="ChEBI" id="CHEBI:18420"/>
    </ligand>
</feature>
<feature type="binding site" evidence="1">
    <location>
        <position position="218"/>
    </location>
    <ligand>
        <name>Mg(2+)</name>
        <dbReference type="ChEBI" id="CHEBI:18420"/>
    </ligand>
</feature>
<feature type="binding site" evidence="1">
    <location>
        <position position="220"/>
    </location>
    <ligand>
        <name>Mg(2+)</name>
        <dbReference type="ChEBI" id="CHEBI:18420"/>
    </ligand>
</feature>
<reference key="1">
    <citation type="journal article" date="2009" name="PLoS Genet.">
        <title>Organised genome dynamics in the Escherichia coli species results in highly diverse adaptive paths.</title>
        <authorList>
            <person name="Touchon M."/>
            <person name="Hoede C."/>
            <person name="Tenaillon O."/>
            <person name="Barbe V."/>
            <person name="Baeriswyl S."/>
            <person name="Bidet P."/>
            <person name="Bingen E."/>
            <person name="Bonacorsi S."/>
            <person name="Bouchier C."/>
            <person name="Bouvet O."/>
            <person name="Calteau A."/>
            <person name="Chiapello H."/>
            <person name="Clermont O."/>
            <person name="Cruveiller S."/>
            <person name="Danchin A."/>
            <person name="Diard M."/>
            <person name="Dossat C."/>
            <person name="Karoui M.E."/>
            <person name="Frapy E."/>
            <person name="Garry L."/>
            <person name="Ghigo J.M."/>
            <person name="Gilles A.M."/>
            <person name="Johnson J."/>
            <person name="Le Bouguenec C."/>
            <person name="Lescat M."/>
            <person name="Mangenot S."/>
            <person name="Martinez-Jehanne V."/>
            <person name="Matic I."/>
            <person name="Nassif X."/>
            <person name="Oztas S."/>
            <person name="Petit M.A."/>
            <person name="Pichon C."/>
            <person name="Rouy Z."/>
            <person name="Ruf C.S."/>
            <person name="Schneider D."/>
            <person name="Tourret J."/>
            <person name="Vacherie B."/>
            <person name="Vallenet D."/>
            <person name="Medigue C."/>
            <person name="Rocha E.P.C."/>
            <person name="Denamur E."/>
        </authorList>
    </citation>
    <scope>NUCLEOTIDE SEQUENCE [LARGE SCALE GENOMIC DNA]</scope>
    <source>
        <strain>ATCC 35469 / DSM 13698 / BCRC 15582 / CCUG 18766 / IAM 14443 / JCM 21226 / LMG 7866 / NBRC 102419 / NCTC 12128 / CDC 0568-73</strain>
    </source>
</reference>
<sequence length="299" mass="31880">MADLPASLLILNGKSADNEQLREAIMLLRDEGIKIHVRVTWEKGDAARFVDEARQLGVATVIAGGGDGTINEVATALIQCEGNVIPALGILPLGTANDFATSVGIPVALDKALKLAIAGNAIEIDIAQVNKETCFINMATGGFGTRITTETPEKLKAALGGVSYIIHGLMRMDTLQPDRCEIRGENFHWQGDALVIGIGNGRQAGGGQQLCPNALINDGLLQLRIFTGDEILPALVSTLKPDEENPNIIDGASAWFDIQAPHDITFNLDGEPLSGQNFHIEILPAALRCRLPPDCPLLR</sequence>
<name>YEGS_ESCF3</name>
<protein>
    <recommendedName>
        <fullName evidence="1">Probable lipid kinase YegS</fullName>
        <ecNumber evidence="1">2.7.1.-</ecNumber>
    </recommendedName>
</protein>
<keyword id="KW-0067">ATP-binding</keyword>
<keyword id="KW-0963">Cytoplasm</keyword>
<keyword id="KW-0418">Kinase</keyword>
<keyword id="KW-0444">Lipid biosynthesis</keyword>
<keyword id="KW-0443">Lipid metabolism</keyword>
<keyword id="KW-0460">Magnesium</keyword>
<keyword id="KW-0479">Metal-binding</keyword>
<keyword id="KW-0547">Nucleotide-binding</keyword>
<keyword id="KW-0594">Phospholipid biosynthesis</keyword>
<keyword id="KW-1208">Phospholipid metabolism</keyword>
<keyword id="KW-0808">Transferase</keyword>
<comment type="function">
    <text evidence="1">Probably phosphorylates lipids; the in vivo substrate is unknown.</text>
</comment>
<comment type="cofactor">
    <cofactor evidence="1">
        <name>Mg(2+)</name>
        <dbReference type="ChEBI" id="CHEBI:18420"/>
    </cofactor>
    <cofactor evidence="1">
        <name>Ca(2+)</name>
        <dbReference type="ChEBI" id="CHEBI:29108"/>
    </cofactor>
    <text evidence="1">Binds 1 Mg(2+) ion per subunit. Ca(2+) may be able to substitute.</text>
</comment>
<comment type="subcellular location">
    <subcellularLocation>
        <location evidence="1">Cytoplasm</location>
    </subcellularLocation>
</comment>
<comment type="similarity">
    <text evidence="1">Belongs to the diacylglycerol/lipid kinase family. YegS lipid kinase subfamily.</text>
</comment>
<accession>B7LV48</accession>